<sequence length="142" mass="16019">MKTFTAKPETVKRDWYVVDATGKTLGRLATELARRLRGKHKAEYTPHVDTGDYIIVLNADKVAVTGNKRTDKVYYHHTGHIGGIKQATFEEMIARRPERVIEIAVKGMLPKGPLGRAMFRKLKVYAGNEHNHAAQQPQVLDI</sequence>
<name>RL13_ECOK1</name>
<evidence type="ECO:0000255" key="1">
    <source>
        <dbReference type="HAMAP-Rule" id="MF_01366"/>
    </source>
</evidence>
<evidence type="ECO:0000305" key="2"/>
<keyword id="KW-1185">Reference proteome</keyword>
<keyword id="KW-0687">Ribonucleoprotein</keyword>
<keyword id="KW-0689">Ribosomal protein</keyword>
<accession>A1AGC4</accession>
<organism>
    <name type="scientific">Escherichia coli O1:K1 / APEC</name>
    <dbReference type="NCBI Taxonomy" id="405955"/>
    <lineage>
        <taxon>Bacteria</taxon>
        <taxon>Pseudomonadati</taxon>
        <taxon>Pseudomonadota</taxon>
        <taxon>Gammaproteobacteria</taxon>
        <taxon>Enterobacterales</taxon>
        <taxon>Enterobacteriaceae</taxon>
        <taxon>Escherichia</taxon>
    </lineage>
</organism>
<dbReference type="EMBL" id="CP000468">
    <property type="protein sequence ID" value="ABJ02714.1"/>
    <property type="molecule type" value="Genomic_DNA"/>
</dbReference>
<dbReference type="RefSeq" id="WP_000847559.1">
    <property type="nucleotide sequence ID" value="NZ_CADILS010000003.1"/>
</dbReference>
<dbReference type="SMR" id="A1AGC4"/>
<dbReference type="GeneID" id="89518067"/>
<dbReference type="KEGG" id="ecv:APECO1_3213"/>
<dbReference type="HOGENOM" id="CLU_082184_2_2_6"/>
<dbReference type="Proteomes" id="UP000008216">
    <property type="component" value="Chromosome"/>
</dbReference>
<dbReference type="GO" id="GO:0022625">
    <property type="term" value="C:cytosolic large ribosomal subunit"/>
    <property type="evidence" value="ECO:0007669"/>
    <property type="project" value="TreeGrafter"/>
</dbReference>
<dbReference type="GO" id="GO:0003729">
    <property type="term" value="F:mRNA binding"/>
    <property type="evidence" value="ECO:0007669"/>
    <property type="project" value="TreeGrafter"/>
</dbReference>
<dbReference type="GO" id="GO:0003735">
    <property type="term" value="F:structural constituent of ribosome"/>
    <property type="evidence" value="ECO:0007669"/>
    <property type="project" value="InterPro"/>
</dbReference>
<dbReference type="GO" id="GO:0017148">
    <property type="term" value="P:negative regulation of translation"/>
    <property type="evidence" value="ECO:0007669"/>
    <property type="project" value="TreeGrafter"/>
</dbReference>
<dbReference type="GO" id="GO:0006412">
    <property type="term" value="P:translation"/>
    <property type="evidence" value="ECO:0007669"/>
    <property type="project" value="UniProtKB-UniRule"/>
</dbReference>
<dbReference type="CDD" id="cd00392">
    <property type="entry name" value="Ribosomal_L13"/>
    <property type="match status" value="1"/>
</dbReference>
<dbReference type="FunFam" id="3.90.1180.10:FF:000001">
    <property type="entry name" value="50S ribosomal protein L13"/>
    <property type="match status" value="1"/>
</dbReference>
<dbReference type="Gene3D" id="3.90.1180.10">
    <property type="entry name" value="Ribosomal protein L13"/>
    <property type="match status" value="1"/>
</dbReference>
<dbReference type="HAMAP" id="MF_01366">
    <property type="entry name" value="Ribosomal_uL13"/>
    <property type="match status" value="1"/>
</dbReference>
<dbReference type="InterPro" id="IPR005822">
    <property type="entry name" value="Ribosomal_uL13"/>
</dbReference>
<dbReference type="InterPro" id="IPR005823">
    <property type="entry name" value="Ribosomal_uL13_bac-type"/>
</dbReference>
<dbReference type="InterPro" id="IPR023563">
    <property type="entry name" value="Ribosomal_uL13_CS"/>
</dbReference>
<dbReference type="InterPro" id="IPR036899">
    <property type="entry name" value="Ribosomal_uL13_sf"/>
</dbReference>
<dbReference type="NCBIfam" id="TIGR01066">
    <property type="entry name" value="rplM_bact"/>
    <property type="match status" value="1"/>
</dbReference>
<dbReference type="PANTHER" id="PTHR11545:SF2">
    <property type="entry name" value="LARGE RIBOSOMAL SUBUNIT PROTEIN UL13M"/>
    <property type="match status" value="1"/>
</dbReference>
<dbReference type="PANTHER" id="PTHR11545">
    <property type="entry name" value="RIBOSOMAL PROTEIN L13"/>
    <property type="match status" value="1"/>
</dbReference>
<dbReference type="Pfam" id="PF00572">
    <property type="entry name" value="Ribosomal_L13"/>
    <property type="match status" value="1"/>
</dbReference>
<dbReference type="PIRSF" id="PIRSF002181">
    <property type="entry name" value="Ribosomal_L13"/>
    <property type="match status" value="1"/>
</dbReference>
<dbReference type="SUPFAM" id="SSF52161">
    <property type="entry name" value="Ribosomal protein L13"/>
    <property type="match status" value="1"/>
</dbReference>
<dbReference type="PROSITE" id="PS00783">
    <property type="entry name" value="RIBOSOMAL_L13"/>
    <property type="match status" value="1"/>
</dbReference>
<feature type="chain" id="PRO_1000055379" description="Large ribosomal subunit protein uL13">
    <location>
        <begin position="1"/>
        <end position="142"/>
    </location>
</feature>
<gene>
    <name evidence="1" type="primary">rplM</name>
    <name type="ordered locus">Ecok1_32200</name>
    <name type="ORF">APECO1_3213</name>
</gene>
<reference key="1">
    <citation type="journal article" date="2007" name="J. Bacteriol.">
        <title>The genome sequence of avian pathogenic Escherichia coli strain O1:K1:H7 shares strong similarities with human extraintestinal pathogenic E. coli genomes.</title>
        <authorList>
            <person name="Johnson T.J."/>
            <person name="Kariyawasam S."/>
            <person name="Wannemuehler Y."/>
            <person name="Mangiamele P."/>
            <person name="Johnson S.J."/>
            <person name="Doetkott C."/>
            <person name="Skyberg J.A."/>
            <person name="Lynne A.M."/>
            <person name="Johnson J.R."/>
            <person name="Nolan L.K."/>
        </authorList>
    </citation>
    <scope>NUCLEOTIDE SEQUENCE [LARGE SCALE GENOMIC DNA]</scope>
</reference>
<comment type="function">
    <text evidence="1">This protein is one of the early assembly proteins of the 50S ribosomal subunit, although it is not seen to bind rRNA by itself. It is important during the early stages of 50S assembly.</text>
</comment>
<comment type="subunit">
    <text evidence="1">Part of the 50S ribosomal subunit.</text>
</comment>
<comment type="similarity">
    <text evidence="1">Belongs to the universal ribosomal protein uL13 family.</text>
</comment>
<protein>
    <recommendedName>
        <fullName evidence="1">Large ribosomal subunit protein uL13</fullName>
    </recommendedName>
    <alternativeName>
        <fullName evidence="2">50S ribosomal protein L13</fullName>
    </alternativeName>
</protein>
<proteinExistence type="inferred from homology"/>